<sequence>MTTVRVNGMKNGIIKKVSGPVVSAENMDGAAMYELVRVGNEQLVGEIIRLEGSVATIQVYEETSGLTIGDPVLCTGSPLSVELGPGLMGNIFDGIQRPLEKIAERSNSVFIPRGVNVPALDRKKVWEFRPADNLKVGDPITAGDIYGIVPETPLIDHKIMLPPNQMGKIVFLAPPGDYTLEDTVLEIDFNGQKKKFSMVHQWPVRLPRPVTEKLRADKPLLTGQRVLDALFPSVQGGTCAIPGAFGCGKTVISQALSKFSNSDGIVYVGCGERGNEMAEVLKDFPELTMTVGDREESIMKRTLLVANTSNMPVAAREASIYTGITVSEYYRDMGLNISMMADSTSRWAEALREISGRLAEMPADSGYPAYLAARLASFYERAGKVSCLGSPNRQGSITIVGAVSPPGGDFSDPVTSATLGIVQVFWGLDKKLAQRKHFPSVNWLISYSKYMKALEPYYEERFPEFLNYQQKAREILQTEDDLMEIVQLVGKDSLAENDKITLEVAKMIREDFLAQNSFTEYDRFCPFYKSVLMLRNMIHFYELANKAVEGSGEQHLTLAQIKEQMGETIYKISGMKFLDPAQGWSLF</sequence>
<name>VATA_CYACA</name>
<proteinExistence type="inferred from homology"/>
<accession>P48414</accession>
<comment type="function">
    <text>Catalytic subunit of the peripheral V1 complex of vacuolar ATPase. V-ATPase vacuolar ATPase is responsible for acidifying a variety of intracellular compartments in eukaryotic cells.</text>
</comment>
<comment type="catalytic activity">
    <reaction>
        <text>ATP + H2O + 4 H(+)(in) = ADP + phosphate + 5 H(+)(out)</text>
        <dbReference type="Rhea" id="RHEA:57720"/>
        <dbReference type="ChEBI" id="CHEBI:15377"/>
        <dbReference type="ChEBI" id="CHEBI:15378"/>
        <dbReference type="ChEBI" id="CHEBI:30616"/>
        <dbReference type="ChEBI" id="CHEBI:43474"/>
        <dbReference type="ChEBI" id="CHEBI:456216"/>
        <dbReference type="EC" id="7.1.2.2"/>
    </reaction>
</comment>
<comment type="subunit">
    <text>V-ATPase is a heteromultimeric enzyme composed of a peripheral catalytic V1 complex (main components: subunits A, B, C, D, E, and F) attached to an integral membrane V0 proton pore complex (main component: the proteolipid protein).</text>
</comment>
<comment type="similarity">
    <text evidence="2">Belongs to the ATPase alpha/beta chains family.</text>
</comment>
<organism>
    <name type="scientific">Cyanidium caldarium</name>
    <name type="common">Red alga</name>
    <dbReference type="NCBI Taxonomy" id="2771"/>
    <lineage>
        <taxon>Eukaryota</taxon>
        <taxon>Rhodophyta</taxon>
        <taxon>Bangiophyceae</taxon>
        <taxon>Cyanidiales</taxon>
        <taxon>Cyanidiaceae</taxon>
        <taxon>Cyanidium</taxon>
    </lineage>
</organism>
<protein>
    <recommendedName>
        <fullName>V-type proton ATPase catalytic subunit A</fullName>
        <shortName>V-ATPase subunit A</shortName>
        <ecNumber>7.1.2.2</ecNumber>
    </recommendedName>
    <alternativeName>
        <fullName>V-ATPase 69 kDa subunit</fullName>
    </alternativeName>
    <alternativeName>
        <fullName>Vacuolar proton pump subunit alpha</fullName>
    </alternativeName>
</protein>
<evidence type="ECO:0000255" key="1"/>
<evidence type="ECO:0000305" key="2"/>
<feature type="chain" id="PRO_0000144578" description="V-type proton ATPase catalytic subunit A">
    <location>
        <begin position="1"/>
        <end position="587"/>
    </location>
</feature>
<feature type="binding site" evidence="1">
    <location>
        <begin position="243"/>
        <end position="250"/>
    </location>
    <ligand>
        <name>ATP</name>
        <dbReference type="ChEBI" id="CHEBI:30616"/>
    </ligand>
</feature>
<reference key="1">
    <citation type="journal article" date="1995" name="Biochim. Biophys. Acta">
        <title>Cyanidium caldarium genes encoding subunits A and B of V-ATPase.</title>
        <authorList>
            <person name="Ziegler K."/>
            <person name="Hauska G."/>
            <person name="Nelson N."/>
        </authorList>
    </citation>
    <scope>NUCLEOTIDE SEQUENCE [GENOMIC DNA]</scope>
</reference>
<keyword id="KW-0067">ATP-binding</keyword>
<keyword id="KW-0375">Hydrogen ion transport</keyword>
<keyword id="KW-0406">Ion transport</keyword>
<keyword id="KW-0547">Nucleotide-binding</keyword>
<keyword id="KW-1278">Translocase</keyword>
<keyword id="KW-0813">Transport</keyword>
<dbReference type="EC" id="7.1.2.2"/>
<dbReference type="EMBL" id="U17100">
    <property type="protein sequence ID" value="AAA85820.1"/>
    <property type="molecule type" value="Genomic_DNA"/>
</dbReference>
<dbReference type="PIR" id="T14360">
    <property type="entry name" value="T14360"/>
</dbReference>
<dbReference type="SMR" id="P48414"/>
<dbReference type="GO" id="GO:0033180">
    <property type="term" value="C:proton-transporting V-type ATPase, V1 domain"/>
    <property type="evidence" value="ECO:0007669"/>
    <property type="project" value="InterPro"/>
</dbReference>
<dbReference type="GO" id="GO:0005524">
    <property type="term" value="F:ATP binding"/>
    <property type="evidence" value="ECO:0007669"/>
    <property type="project" value="UniProtKB-KW"/>
</dbReference>
<dbReference type="GO" id="GO:0016887">
    <property type="term" value="F:ATP hydrolysis activity"/>
    <property type="evidence" value="ECO:0007669"/>
    <property type="project" value="InterPro"/>
</dbReference>
<dbReference type="GO" id="GO:0046961">
    <property type="term" value="F:proton-transporting ATPase activity, rotational mechanism"/>
    <property type="evidence" value="ECO:0007669"/>
    <property type="project" value="InterPro"/>
</dbReference>
<dbReference type="GO" id="GO:0046034">
    <property type="term" value="P:ATP metabolic process"/>
    <property type="evidence" value="ECO:0007669"/>
    <property type="project" value="InterPro"/>
</dbReference>
<dbReference type="CDD" id="cd18111">
    <property type="entry name" value="ATP-synt_V_A-type_alpha_C"/>
    <property type="match status" value="1"/>
</dbReference>
<dbReference type="CDD" id="cd18119">
    <property type="entry name" value="ATP-synt_V_A-type_alpha_N"/>
    <property type="match status" value="1"/>
</dbReference>
<dbReference type="CDD" id="cd01134">
    <property type="entry name" value="V_A-ATPase_A"/>
    <property type="match status" value="1"/>
</dbReference>
<dbReference type="FunFam" id="1.10.1140.10:FF:000002">
    <property type="entry name" value="V-type proton ATPase catalytic subunit A"/>
    <property type="match status" value="1"/>
</dbReference>
<dbReference type="FunFam" id="2.40.30.20:FF:000002">
    <property type="entry name" value="V-type proton ATPase catalytic subunit A"/>
    <property type="match status" value="1"/>
</dbReference>
<dbReference type="FunFam" id="2.40.50.100:FF:000008">
    <property type="entry name" value="V-type proton ATPase catalytic subunit A"/>
    <property type="match status" value="1"/>
</dbReference>
<dbReference type="FunFam" id="3.40.50.300:FF:000052">
    <property type="entry name" value="V-type proton ATPase catalytic subunit A"/>
    <property type="match status" value="1"/>
</dbReference>
<dbReference type="Gene3D" id="2.40.30.20">
    <property type="match status" value="1"/>
</dbReference>
<dbReference type="Gene3D" id="2.40.50.100">
    <property type="match status" value="1"/>
</dbReference>
<dbReference type="Gene3D" id="1.10.1140.10">
    <property type="entry name" value="Bovine Mitochondrial F1-atpase, Atp Synthase Beta Chain, Chain D, domain 3"/>
    <property type="match status" value="1"/>
</dbReference>
<dbReference type="Gene3D" id="3.40.50.300">
    <property type="entry name" value="P-loop containing nucleotide triphosphate hydrolases"/>
    <property type="match status" value="1"/>
</dbReference>
<dbReference type="HAMAP" id="MF_00309">
    <property type="entry name" value="ATP_synth_A_arch"/>
    <property type="match status" value="1"/>
</dbReference>
<dbReference type="InterPro" id="IPR055190">
    <property type="entry name" value="ATP-synt_VA_C"/>
</dbReference>
<dbReference type="InterPro" id="IPR031686">
    <property type="entry name" value="ATP-synth_a_Xtn"/>
</dbReference>
<dbReference type="InterPro" id="IPR023366">
    <property type="entry name" value="ATP_synth_asu-like_sf"/>
</dbReference>
<dbReference type="InterPro" id="IPR020003">
    <property type="entry name" value="ATPase_a/bsu_AS"/>
</dbReference>
<dbReference type="InterPro" id="IPR004100">
    <property type="entry name" value="ATPase_F1/V1/A1_a/bsu_N"/>
</dbReference>
<dbReference type="InterPro" id="IPR036121">
    <property type="entry name" value="ATPase_F1/V1/A1_a/bsu_N_sf"/>
</dbReference>
<dbReference type="InterPro" id="IPR000194">
    <property type="entry name" value="ATPase_F1/V1/A1_a/bsu_nucl-bd"/>
</dbReference>
<dbReference type="InterPro" id="IPR024034">
    <property type="entry name" value="ATPase_F1/V1_b/a_C"/>
</dbReference>
<dbReference type="InterPro" id="IPR005725">
    <property type="entry name" value="ATPase_V1-cplx_asu"/>
</dbReference>
<dbReference type="InterPro" id="IPR027417">
    <property type="entry name" value="P-loop_NTPase"/>
</dbReference>
<dbReference type="InterPro" id="IPR022878">
    <property type="entry name" value="V-ATPase_asu"/>
</dbReference>
<dbReference type="NCBIfam" id="NF003220">
    <property type="entry name" value="PRK04192.1"/>
    <property type="match status" value="1"/>
</dbReference>
<dbReference type="NCBIfam" id="TIGR01042">
    <property type="entry name" value="V-ATPase_V1_A"/>
    <property type="match status" value="1"/>
</dbReference>
<dbReference type="PANTHER" id="PTHR43607:SF1">
    <property type="entry name" value="H(+)-TRANSPORTING TWO-SECTOR ATPASE"/>
    <property type="match status" value="1"/>
</dbReference>
<dbReference type="PANTHER" id="PTHR43607">
    <property type="entry name" value="V-TYPE PROTON ATPASE CATALYTIC SUBUNIT A"/>
    <property type="match status" value="1"/>
</dbReference>
<dbReference type="Pfam" id="PF00006">
    <property type="entry name" value="ATP-synt_ab"/>
    <property type="match status" value="1"/>
</dbReference>
<dbReference type="Pfam" id="PF02874">
    <property type="entry name" value="ATP-synt_ab_N"/>
    <property type="match status" value="1"/>
</dbReference>
<dbReference type="Pfam" id="PF16886">
    <property type="entry name" value="ATP-synt_ab_Xtn"/>
    <property type="match status" value="1"/>
</dbReference>
<dbReference type="Pfam" id="PF22919">
    <property type="entry name" value="ATP-synt_VA_C"/>
    <property type="match status" value="1"/>
</dbReference>
<dbReference type="SUPFAM" id="SSF47917">
    <property type="entry name" value="C-terminal domain of alpha and beta subunits of F1 ATP synthase"/>
    <property type="match status" value="1"/>
</dbReference>
<dbReference type="SUPFAM" id="SSF50615">
    <property type="entry name" value="N-terminal domain of alpha and beta subunits of F1 ATP synthase"/>
    <property type="match status" value="1"/>
</dbReference>
<dbReference type="SUPFAM" id="SSF52540">
    <property type="entry name" value="P-loop containing nucleoside triphosphate hydrolases"/>
    <property type="match status" value="1"/>
</dbReference>
<dbReference type="PROSITE" id="PS00152">
    <property type="entry name" value="ATPASE_ALPHA_BETA"/>
    <property type="match status" value="1"/>
</dbReference>